<reference key="1">
    <citation type="journal article" date="2007" name="PLoS Genet.">
        <title>Patterns and implications of gene gain and loss in the evolution of Prochlorococcus.</title>
        <authorList>
            <person name="Kettler G.C."/>
            <person name="Martiny A.C."/>
            <person name="Huang K."/>
            <person name="Zucker J."/>
            <person name="Coleman M.L."/>
            <person name="Rodrigue S."/>
            <person name="Chen F."/>
            <person name="Lapidus A."/>
            <person name="Ferriera S."/>
            <person name="Johnson J."/>
            <person name="Steglich C."/>
            <person name="Church G.M."/>
            <person name="Richardson P."/>
            <person name="Chisholm S.W."/>
        </authorList>
    </citation>
    <scope>NUCLEOTIDE SEQUENCE [LARGE SCALE GENOMIC DNA]</scope>
    <source>
        <strain>MIT 9515</strain>
    </source>
</reference>
<sequence length="80" mass="8562">MSQEEILQKVCSIVSEQLSVESGEVKSDSNFQNDLGADSLDTVELVMALEEAFDIEIPDEAAEGIATVGDAVKFIEAKKG</sequence>
<dbReference type="EMBL" id="CP000552">
    <property type="protein sequence ID" value="ABM73003.1"/>
    <property type="molecule type" value="Genomic_DNA"/>
</dbReference>
<dbReference type="RefSeq" id="WP_011821088.1">
    <property type="nucleotide sequence ID" value="NC_008817.1"/>
</dbReference>
<dbReference type="SMR" id="A2BYZ2"/>
<dbReference type="STRING" id="167542.P9515_17961"/>
<dbReference type="GeneID" id="60200634"/>
<dbReference type="KEGG" id="pmc:P9515_17961"/>
<dbReference type="eggNOG" id="COG0236">
    <property type="taxonomic scope" value="Bacteria"/>
</dbReference>
<dbReference type="HOGENOM" id="CLU_108696_5_1_3"/>
<dbReference type="OrthoDB" id="9804551at2"/>
<dbReference type="UniPathway" id="UPA00094"/>
<dbReference type="Proteomes" id="UP000001589">
    <property type="component" value="Chromosome"/>
</dbReference>
<dbReference type="GO" id="GO:0005829">
    <property type="term" value="C:cytosol"/>
    <property type="evidence" value="ECO:0007669"/>
    <property type="project" value="TreeGrafter"/>
</dbReference>
<dbReference type="GO" id="GO:0016020">
    <property type="term" value="C:membrane"/>
    <property type="evidence" value="ECO:0007669"/>
    <property type="project" value="GOC"/>
</dbReference>
<dbReference type="GO" id="GO:0000035">
    <property type="term" value="F:acyl binding"/>
    <property type="evidence" value="ECO:0007669"/>
    <property type="project" value="TreeGrafter"/>
</dbReference>
<dbReference type="GO" id="GO:0000036">
    <property type="term" value="F:acyl carrier activity"/>
    <property type="evidence" value="ECO:0007669"/>
    <property type="project" value="UniProtKB-UniRule"/>
</dbReference>
<dbReference type="GO" id="GO:0009245">
    <property type="term" value="P:lipid A biosynthetic process"/>
    <property type="evidence" value="ECO:0007669"/>
    <property type="project" value="TreeGrafter"/>
</dbReference>
<dbReference type="FunFam" id="1.10.1200.10:FF:000003">
    <property type="entry name" value="Acyl carrier protein"/>
    <property type="match status" value="1"/>
</dbReference>
<dbReference type="Gene3D" id="1.10.1200.10">
    <property type="entry name" value="ACP-like"/>
    <property type="match status" value="1"/>
</dbReference>
<dbReference type="HAMAP" id="MF_01217">
    <property type="entry name" value="Acyl_carrier"/>
    <property type="match status" value="1"/>
</dbReference>
<dbReference type="InterPro" id="IPR003231">
    <property type="entry name" value="ACP"/>
</dbReference>
<dbReference type="InterPro" id="IPR036736">
    <property type="entry name" value="ACP-like_sf"/>
</dbReference>
<dbReference type="InterPro" id="IPR009081">
    <property type="entry name" value="PP-bd_ACP"/>
</dbReference>
<dbReference type="InterPro" id="IPR006162">
    <property type="entry name" value="Ppantetheine_attach_site"/>
</dbReference>
<dbReference type="NCBIfam" id="TIGR00517">
    <property type="entry name" value="acyl_carrier"/>
    <property type="match status" value="1"/>
</dbReference>
<dbReference type="NCBIfam" id="NF002148">
    <property type="entry name" value="PRK00982.1-2"/>
    <property type="match status" value="1"/>
</dbReference>
<dbReference type="NCBIfam" id="NF002150">
    <property type="entry name" value="PRK00982.1-4"/>
    <property type="match status" value="1"/>
</dbReference>
<dbReference type="NCBIfam" id="NF002151">
    <property type="entry name" value="PRK00982.1-5"/>
    <property type="match status" value="1"/>
</dbReference>
<dbReference type="NCBIfam" id="NF009104">
    <property type="entry name" value="PRK12449.1"/>
    <property type="match status" value="1"/>
</dbReference>
<dbReference type="PANTHER" id="PTHR20863">
    <property type="entry name" value="ACYL CARRIER PROTEIN"/>
    <property type="match status" value="1"/>
</dbReference>
<dbReference type="PANTHER" id="PTHR20863:SF76">
    <property type="entry name" value="CARRIER DOMAIN-CONTAINING PROTEIN"/>
    <property type="match status" value="1"/>
</dbReference>
<dbReference type="Pfam" id="PF00550">
    <property type="entry name" value="PP-binding"/>
    <property type="match status" value="1"/>
</dbReference>
<dbReference type="SUPFAM" id="SSF47336">
    <property type="entry name" value="ACP-like"/>
    <property type="match status" value="1"/>
</dbReference>
<dbReference type="PROSITE" id="PS50075">
    <property type="entry name" value="CARRIER"/>
    <property type="match status" value="1"/>
</dbReference>
<dbReference type="PROSITE" id="PS00012">
    <property type="entry name" value="PHOSPHOPANTETHEINE"/>
    <property type="match status" value="1"/>
</dbReference>
<proteinExistence type="inferred from homology"/>
<accession>A2BYZ2</accession>
<comment type="function">
    <text evidence="1">Carrier of the growing fatty acid chain in fatty acid biosynthesis.</text>
</comment>
<comment type="pathway">
    <text evidence="1">Lipid metabolism; fatty acid biosynthesis.</text>
</comment>
<comment type="subcellular location">
    <subcellularLocation>
        <location evidence="1">Cytoplasm</location>
    </subcellularLocation>
</comment>
<comment type="PTM">
    <text evidence="1">4'-phosphopantetheine is transferred from CoA to a specific serine of apo-ACP by AcpS. This modification is essential for activity because fatty acids are bound in thioester linkage to the sulfhydryl of the prosthetic group.</text>
</comment>
<comment type="similarity">
    <text evidence="1">Belongs to the acyl carrier protein (ACP) family.</text>
</comment>
<organism>
    <name type="scientific">Prochlorococcus marinus (strain MIT 9515)</name>
    <dbReference type="NCBI Taxonomy" id="167542"/>
    <lineage>
        <taxon>Bacteria</taxon>
        <taxon>Bacillati</taxon>
        <taxon>Cyanobacteriota</taxon>
        <taxon>Cyanophyceae</taxon>
        <taxon>Synechococcales</taxon>
        <taxon>Prochlorococcaceae</taxon>
        <taxon>Prochlorococcus</taxon>
    </lineage>
</organism>
<keyword id="KW-0963">Cytoplasm</keyword>
<keyword id="KW-0275">Fatty acid biosynthesis</keyword>
<keyword id="KW-0276">Fatty acid metabolism</keyword>
<keyword id="KW-0444">Lipid biosynthesis</keyword>
<keyword id="KW-0443">Lipid metabolism</keyword>
<keyword id="KW-0596">Phosphopantetheine</keyword>
<keyword id="KW-0597">Phosphoprotein</keyword>
<protein>
    <recommendedName>
        <fullName evidence="1">Acyl carrier protein</fullName>
        <shortName evidence="1">ACP</shortName>
    </recommendedName>
</protein>
<feature type="chain" id="PRO_1000066654" description="Acyl carrier protein">
    <location>
        <begin position="1"/>
        <end position="80"/>
    </location>
</feature>
<feature type="domain" description="Carrier" evidence="2">
    <location>
        <begin position="1"/>
        <end position="79"/>
    </location>
</feature>
<feature type="modified residue" description="O-(pantetheine 4'-phosphoryl)serine" evidence="2">
    <location>
        <position position="39"/>
    </location>
</feature>
<gene>
    <name evidence="1" type="primary">acpP</name>
    <name type="ordered locus">P9515_17961</name>
</gene>
<name>ACP_PROM5</name>
<evidence type="ECO:0000255" key="1">
    <source>
        <dbReference type="HAMAP-Rule" id="MF_01217"/>
    </source>
</evidence>
<evidence type="ECO:0000255" key="2">
    <source>
        <dbReference type="PROSITE-ProRule" id="PRU00258"/>
    </source>
</evidence>